<proteinExistence type="inferred from homology"/>
<accession>Q25109</accession>
<organism>
    <name type="scientific">Hirtodrosophila pictiventris</name>
    <name type="common">Fruit fly</name>
    <name type="synonym">Drosophila pictiventris</name>
    <dbReference type="NCBI Taxonomy" id="7255"/>
    <lineage>
        <taxon>Eukaryota</taxon>
        <taxon>Metazoa</taxon>
        <taxon>Ecdysozoa</taxon>
        <taxon>Arthropoda</taxon>
        <taxon>Hexapoda</taxon>
        <taxon>Insecta</taxon>
        <taxon>Pterygota</taxon>
        <taxon>Neoptera</taxon>
        <taxon>Endopterygota</taxon>
        <taxon>Diptera</taxon>
        <taxon>Brachycera</taxon>
        <taxon>Muscomorpha</taxon>
        <taxon>Ephydroidea</taxon>
        <taxon>Drosophilidae</taxon>
        <taxon>Hirtodrosophila</taxon>
    </lineage>
</organism>
<name>PER_HIRPI</name>
<gene>
    <name type="primary">per</name>
</gene>
<keyword id="KW-0090">Biological rhythms</keyword>
<keyword id="KW-0963">Cytoplasm</keyword>
<keyword id="KW-0539">Nucleus</keyword>
<keyword id="KW-0597">Phosphoprotein</keyword>
<keyword id="KW-0677">Repeat</keyword>
<comment type="function">
    <text evidence="1">Essential for biological clock functions. Determines the period length of circadian and ultradian rhythms; an increase in PER dosage leads to shortened circadian rhythms and a decrease leads to lengthened circadian rhythms. Essential for the circadian rhythmicity of locomotor activity, eclosion behavior, and for the rhythmic component of the male courtship song that originates in the thoracic nervous system. The biological cycle depends on the rhythmic formation and nuclear localization of the TIM-PER complex. Light induces the degradation of TIM, which promotes elimination of PER. Nuclear activity of the heterodimer coordinatively regulates PER and TIM transcription through a negative feedback loop. Behaves as a negative element in circadian transcriptional loop. Does not appear to bind DNA, suggesting indirect transcriptional inhibition (By similarity).</text>
</comment>
<comment type="subunit">
    <text evidence="1">Forms a heterodimer with timeless (TIM); the complex then translocates into the nucleus.</text>
</comment>
<comment type="subcellular location">
    <subcellularLocation>
        <location evidence="1">Nucleus</location>
    </subcellularLocation>
    <subcellularLocation>
        <location evidence="1">Cytoplasm</location>
        <location evidence="1">Perinuclear region</location>
    </subcellularLocation>
    <text evidence="1">Nuclear at specific periods of the day. First accumulates in the perinuclear region about one hour before translocation into the nucleus. Interaction with Tim is required for nuclear localization (By similarity).</text>
</comment>
<comment type="PTM">
    <text evidence="1">Phosphorylated with a circadian rhythmicity, probably by the double-time protein (dbt). Phosphorylation could be implicated in the stability of per monomer and in the formation of heterodimer per-tim (By similarity).</text>
</comment>
<sequence length="124" mass="12529">SKSSTETPPSYNQLNYNENLLRFFNSKPVTAPVELDPPKGESSYVSSAREDARSTLSPVHGFEGSGGSGSSGNFTTGSNVRMSSVTNTSNAGTGTSSAGGNGNGGSGASHAPPVTVTLTESLLN</sequence>
<feature type="chain" id="PRO_0000162618" description="Period circadian protein">
    <location>
        <begin position="1" status="less than"/>
        <end position="124" status="greater than"/>
    </location>
</feature>
<feature type="region of interest" description="Disordered" evidence="2">
    <location>
        <begin position="30"/>
        <end position="124"/>
    </location>
</feature>
<feature type="compositionally biased region" description="Low complexity" evidence="2">
    <location>
        <begin position="71"/>
        <end position="96"/>
    </location>
</feature>
<feature type="compositionally biased region" description="Gly residues" evidence="2">
    <location>
        <begin position="97"/>
        <end position="107"/>
    </location>
</feature>
<feature type="non-terminal residue">
    <location>
        <position position="1"/>
    </location>
</feature>
<feature type="non-terminal residue">
    <location>
        <position position="124"/>
    </location>
</feature>
<reference key="1">
    <citation type="journal article" date="1994" name="Mol. Biol. Evol.">
        <title>Big flies, small repeats: the 'Thr-Gly' region of the period gene in Diptera.</title>
        <authorList>
            <person name="Nielsen J."/>
            <person name="Peixoto A.A."/>
            <person name="Piccin A."/>
            <person name="Costa R."/>
            <person name="Kyriacou C.P."/>
            <person name="Chalmers D."/>
        </authorList>
    </citation>
    <scope>NUCLEOTIDE SEQUENCE [GENOMIC DNA]</scope>
</reference>
<dbReference type="EMBL" id="U11808">
    <property type="protein sequence ID" value="AAA76591.1"/>
    <property type="molecule type" value="Genomic_DNA"/>
</dbReference>
<dbReference type="GO" id="GO:0005634">
    <property type="term" value="C:nucleus"/>
    <property type="evidence" value="ECO:0007669"/>
    <property type="project" value="UniProtKB-SubCell"/>
</dbReference>
<dbReference type="GO" id="GO:0048471">
    <property type="term" value="C:perinuclear region of cytoplasm"/>
    <property type="evidence" value="ECO:0007669"/>
    <property type="project" value="UniProtKB-SubCell"/>
</dbReference>
<dbReference type="GO" id="GO:0048511">
    <property type="term" value="P:rhythmic process"/>
    <property type="evidence" value="ECO:0007669"/>
    <property type="project" value="UniProtKB-KW"/>
</dbReference>
<protein>
    <recommendedName>
        <fullName>Period circadian protein</fullName>
    </recommendedName>
</protein>
<evidence type="ECO:0000250" key="1"/>
<evidence type="ECO:0000256" key="2">
    <source>
        <dbReference type="SAM" id="MobiDB-lite"/>
    </source>
</evidence>